<reference key="1">
    <citation type="journal article" date="2011" name="PLoS Genet.">
        <title>Whole-genome comparison reveals novel genetic elements that characterize the genome of industrial strains of Saccharomyces cerevisiae.</title>
        <authorList>
            <person name="Borneman A.R."/>
            <person name="Desany B.A."/>
            <person name="Riches D."/>
            <person name="Affourtit J.P."/>
            <person name="Forgan A.H."/>
            <person name="Pretorius I.S."/>
            <person name="Egholm M."/>
            <person name="Chambers P.J."/>
        </authorList>
    </citation>
    <scope>NUCLEOTIDE SEQUENCE [LARGE SCALE GENOMIC DNA]</scope>
    <source>
        <strain>Lalvin QA23</strain>
    </source>
</reference>
<sequence length="318" mass="34669">MTVITIAKRGLPKLTTSTSSTTTASSSSTITSVXSSSSSLPLLSNSTSSSIIPSITPPSRNGNPYILDSGDMPNGTVFIVVGGIAGVIFLAILLWWVITTYSSHRLTRSVQDYESKMFSXQHTQFYGDSPYMDYPAKENFQDQVHISESDISPGNKDESVKDALVSHTNNEKPFLSNFERPLSSLVSESNRNSLFISPTGDILYKTRLSKLYQESPRLLQKPVIMTSDNVSTNSLVSTISSSSASSLDNGNEKEVGEDIRKPAKIASSPSRKLLNSPESDGSVNRNHSKGNLLVVQSKRKPTPSTYLEHMLEGKEQDE</sequence>
<feature type="chain" id="PRO_0000409314" description="Pheromone-regulated membrane protein 5">
    <location>
        <begin position="1"/>
        <end position="318"/>
    </location>
</feature>
<feature type="transmembrane region" description="Helical" evidence="2">
    <location>
        <begin position="78"/>
        <end position="98"/>
    </location>
</feature>
<feature type="region of interest" description="Disordered" evidence="3">
    <location>
        <begin position="15"/>
        <end position="56"/>
    </location>
</feature>
<feature type="region of interest" description="Disordered" evidence="3">
    <location>
        <begin position="238"/>
        <end position="318"/>
    </location>
</feature>
<feature type="compositionally biased region" description="Low complexity" evidence="3">
    <location>
        <begin position="238"/>
        <end position="247"/>
    </location>
</feature>
<feature type="compositionally biased region" description="Basic and acidic residues" evidence="3">
    <location>
        <begin position="250"/>
        <end position="261"/>
    </location>
</feature>
<feature type="compositionally biased region" description="Polar residues" evidence="3">
    <location>
        <begin position="276"/>
        <end position="285"/>
    </location>
</feature>
<feature type="compositionally biased region" description="Basic and acidic residues" evidence="3">
    <location>
        <begin position="309"/>
        <end position="318"/>
    </location>
</feature>
<feature type="modified residue" description="Phosphoserine" evidence="1">
    <location>
        <position position="129"/>
    </location>
</feature>
<feature type="modified residue" description="Phosphoserine" evidence="1">
    <location>
        <position position="279"/>
    </location>
</feature>
<feature type="modified residue" description="Phosphoserine" evidence="1">
    <location>
        <position position="282"/>
    </location>
</feature>
<feature type="modified residue" description="Phosphoserine" evidence="1">
    <location>
        <position position="288"/>
    </location>
</feature>
<feature type="cross-link" description="Glycyl lysine isopeptide (Lys-Gly) (interchain with G-Cter in ubiquitin)" evidence="1">
    <location>
        <position position="314"/>
    </location>
</feature>
<gene>
    <name type="primary">PRM5</name>
    <name type="ORF">QA23_2310</name>
</gene>
<keyword id="KW-1017">Isopeptide bond</keyword>
<keyword id="KW-0472">Membrane</keyword>
<keyword id="KW-0597">Phosphoprotein</keyword>
<keyword id="KW-0812">Transmembrane</keyword>
<keyword id="KW-1133">Transmembrane helix</keyword>
<keyword id="KW-0832">Ubl conjugation</keyword>
<dbReference type="EMBL" id="ADVV01000043">
    <property type="protein sequence ID" value="EGA82450.1"/>
    <property type="molecule type" value="Genomic_DNA"/>
</dbReference>
<dbReference type="HOGENOM" id="CLU_061224_0_0_1"/>
<dbReference type="OrthoDB" id="39523at4893"/>
<dbReference type="GO" id="GO:0005935">
    <property type="term" value="C:cellular bud neck"/>
    <property type="evidence" value="ECO:0007669"/>
    <property type="project" value="TreeGrafter"/>
</dbReference>
<dbReference type="GO" id="GO:0000324">
    <property type="term" value="C:fungal-type vacuole"/>
    <property type="evidence" value="ECO:0007669"/>
    <property type="project" value="TreeGrafter"/>
</dbReference>
<dbReference type="GO" id="GO:0016020">
    <property type="term" value="C:membrane"/>
    <property type="evidence" value="ECO:0007669"/>
    <property type="project" value="UniProtKB-SubCell"/>
</dbReference>
<dbReference type="InterPro" id="IPR051009">
    <property type="entry name" value="PRM"/>
</dbReference>
<dbReference type="PANTHER" id="PTHR36089">
    <property type="entry name" value="CHITIN SYNTHASE 3 COMPLEX PROTEIN CSI2-RELATED"/>
    <property type="match status" value="1"/>
</dbReference>
<dbReference type="PANTHER" id="PTHR36089:SF1">
    <property type="entry name" value="CHITIN SYNTHASE 3 COMPLEX PROTEIN CSI2-RELATED"/>
    <property type="match status" value="1"/>
</dbReference>
<protein>
    <recommendedName>
        <fullName>Pheromone-regulated membrane protein 5</fullName>
    </recommendedName>
</protein>
<name>PRM5_YEASL</name>
<proteinExistence type="inferred from homology"/>
<comment type="subcellular location">
    <subcellularLocation>
        <location evidence="4">Membrane</location>
        <topology evidence="4">Single-pass membrane protein</topology>
    </subcellularLocation>
</comment>
<comment type="similarity">
    <text evidence="4">Belongs to the PRM5 family.</text>
</comment>
<evidence type="ECO:0000250" key="1">
    <source>
        <dbReference type="UniProtKB" id="P40476"/>
    </source>
</evidence>
<evidence type="ECO:0000255" key="2"/>
<evidence type="ECO:0000256" key="3">
    <source>
        <dbReference type="SAM" id="MobiDB-lite"/>
    </source>
</evidence>
<evidence type="ECO:0000305" key="4"/>
<accession>E7KPQ3</accession>
<organism>
    <name type="scientific">Saccharomyces cerevisiae (strain Lalvin QA23)</name>
    <name type="common">Baker's yeast</name>
    <dbReference type="NCBI Taxonomy" id="764098"/>
    <lineage>
        <taxon>Eukaryota</taxon>
        <taxon>Fungi</taxon>
        <taxon>Dikarya</taxon>
        <taxon>Ascomycota</taxon>
        <taxon>Saccharomycotina</taxon>
        <taxon>Saccharomycetes</taxon>
        <taxon>Saccharomycetales</taxon>
        <taxon>Saccharomycetaceae</taxon>
        <taxon>Saccharomyces</taxon>
    </lineage>
</organism>